<feature type="chain" id="PRO_1000192033" description="Aspartate 1-decarboxylase beta chain" evidence="1">
    <location>
        <begin position="1"/>
        <end position="24"/>
    </location>
</feature>
<feature type="chain" id="PRO_1000192034" description="Aspartate 1-decarboxylase alpha chain" evidence="1">
    <location>
        <begin position="25"/>
        <end position="126"/>
    </location>
</feature>
<feature type="active site" description="Schiff-base intermediate with substrate; via pyruvic acid" evidence="1">
    <location>
        <position position="25"/>
    </location>
</feature>
<feature type="active site" description="Proton donor" evidence="1">
    <location>
        <position position="58"/>
    </location>
</feature>
<feature type="binding site" evidence="1">
    <location>
        <position position="57"/>
    </location>
    <ligand>
        <name>substrate</name>
    </ligand>
</feature>
<feature type="binding site" evidence="1">
    <location>
        <begin position="73"/>
        <end position="75"/>
    </location>
    <ligand>
        <name>substrate</name>
    </ligand>
</feature>
<feature type="modified residue" description="Pyruvic acid (Ser)" evidence="1">
    <location>
        <position position="25"/>
    </location>
</feature>
<accession>B4SUA6</accession>
<name>PAND_SALNS</name>
<evidence type="ECO:0000255" key="1">
    <source>
        <dbReference type="HAMAP-Rule" id="MF_00446"/>
    </source>
</evidence>
<gene>
    <name evidence="1" type="primary">panD</name>
    <name type="ordered locus">SNSL254_A0197</name>
</gene>
<proteinExistence type="inferred from homology"/>
<organism>
    <name type="scientific">Salmonella newport (strain SL254)</name>
    <dbReference type="NCBI Taxonomy" id="423368"/>
    <lineage>
        <taxon>Bacteria</taxon>
        <taxon>Pseudomonadati</taxon>
        <taxon>Pseudomonadota</taxon>
        <taxon>Gammaproteobacteria</taxon>
        <taxon>Enterobacterales</taxon>
        <taxon>Enterobacteriaceae</taxon>
        <taxon>Salmonella</taxon>
    </lineage>
</organism>
<protein>
    <recommendedName>
        <fullName evidence="1">Aspartate 1-decarboxylase</fullName>
        <ecNumber evidence="1">4.1.1.11</ecNumber>
    </recommendedName>
    <alternativeName>
        <fullName evidence="1">Aspartate alpha-decarboxylase</fullName>
    </alternativeName>
    <component>
        <recommendedName>
            <fullName evidence="1">Aspartate 1-decarboxylase beta chain</fullName>
        </recommendedName>
    </component>
    <component>
        <recommendedName>
            <fullName evidence="1">Aspartate 1-decarboxylase alpha chain</fullName>
        </recommendedName>
    </component>
</protein>
<dbReference type="EC" id="4.1.1.11" evidence="1"/>
<dbReference type="EMBL" id="CP001113">
    <property type="protein sequence ID" value="ACF62318.1"/>
    <property type="molecule type" value="Genomic_DNA"/>
</dbReference>
<dbReference type="RefSeq" id="WP_000621526.1">
    <property type="nucleotide sequence ID" value="NZ_CCMR01000003.1"/>
</dbReference>
<dbReference type="SMR" id="B4SUA6"/>
<dbReference type="GeneID" id="89550440"/>
<dbReference type="KEGG" id="see:SNSL254_A0197"/>
<dbReference type="HOGENOM" id="CLU_115305_2_1_6"/>
<dbReference type="UniPathway" id="UPA00028">
    <property type="reaction ID" value="UER00002"/>
</dbReference>
<dbReference type="Proteomes" id="UP000008824">
    <property type="component" value="Chromosome"/>
</dbReference>
<dbReference type="GO" id="GO:0005829">
    <property type="term" value="C:cytosol"/>
    <property type="evidence" value="ECO:0007669"/>
    <property type="project" value="TreeGrafter"/>
</dbReference>
<dbReference type="GO" id="GO:0004068">
    <property type="term" value="F:aspartate 1-decarboxylase activity"/>
    <property type="evidence" value="ECO:0007669"/>
    <property type="project" value="UniProtKB-UniRule"/>
</dbReference>
<dbReference type="GO" id="GO:0006523">
    <property type="term" value="P:alanine biosynthetic process"/>
    <property type="evidence" value="ECO:0007669"/>
    <property type="project" value="InterPro"/>
</dbReference>
<dbReference type="GO" id="GO:0015940">
    <property type="term" value="P:pantothenate biosynthetic process"/>
    <property type="evidence" value="ECO:0007669"/>
    <property type="project" value="UniProtKB-UniRule"/>
</dbReference>
<dbReference type="CDD" id="cd06919">
    <property type="entry name" value="Asp_decarbox"/>
    <property type="match status" value="1"/>
</dbReference>
<dbReference type="FunFam" id="2.40.40.20:FF:000004">
    <property type="entry name" value="Aspartate 1-decarboxylase"/>
    <property type="match status" value="1"/>
</dbReference>
<dbReference type="Gene3D" id="2.40.40.20">
    <property type="match status" value="1"/>
</dbReference>
<dbReference type="HAMAP" id="MF_00446">
    <property type="entry name" value="PanD"/>
    <property type="match status" value="1"/>
</dbReference>
<dbReference type="InterPro" id="IPR009010">
    <property type="entry name" value="Asp_de-COase-like_dom_sf"/>
</dbReference>
<dbReference type="InterPro" id="IPR003190">
    <property type="entry name" value="Asp_decarbox"/>
</dbReference>
<dbReference type="NCBIfam" id="TIGR00223">
    <property type="entry name" value="panD"/>
    <property type="match status" value="1"/>
</dbReference>
<dbReference type="PANTHER" id="PTHR21012">
    <property type="entry name" value="ASPARTATE 1-DECARBOXYLASE"/>
    <property type="match status" value="1"/>
</dbReference>
<dbReference type="PANTHER" id="PTHR21012:SF0">
    <property type="entry name" value="ASPARTATE 1-DECARBOXYLASE"/>
    <property type="match status" value="1"/>
</dbReference>
<dbReference type="Pfam" id="PF02261">
    <property type="entry name" value="Asp_decarbox"/>
    <property type="match status" value="1"/>
</dbReference>
<dbReference type="PIRSF" id="PIRSF006246">
    <property type="entry name" value="Asp_decarbox"/>
    <property type="match status" value="1"/>
</dbReference>
<dbReference type="SUPFAM" id="SSF50692">
    <property type="entry name" value="ADC-like"/>
    <property type="match status" value="1"/>
</dbReference>
<reference key="1">
    <citation type="journal article" date="2011" name="J. Bacteriol.">
        <title>Comparative genomics of 28 Salmonella enterica isolates: evidence for CRISPR-mediated adaptive sublineage evolution.</title>
        <authorList>
            <person name="Fricke W.F."/>
            <person name="Mammel M.K."/>
            <person name="McDermott P.F."/>
            <person name="Tartera C."/>
            <person name="White D.G."/>
            <person name="Leclerc J.E."/>
            <person name="Ravel J."/>
            <person name="Cebula T.A."/>
        </authorList>
    </citation>
    <scope>NUCLEOTIDE SEQUENCE [LARGE SCALE GENOMIC DNA]</scope>
    <source>
        <strain>SL254</strain>
    </source>
</reference>
<sequence>MIRTMLQGKLHRVKVTQADLHYEGSCAIDQDFLDASGILENEAIDIWNVTNGKRFSTYAIAAERGSRIISVNGAAAHCAEVGDIVIIASFVTMSDEEARTWRPKVAYFEGDNEMKRTAKAIPVQVA</sequence>
<keyword id="KW-0068">Autocatalytic cleavage</keyword>
<keyword id="KW-0963">Cytoplasm</keyword>
<keyword id="KW-0210">Decarboxylase</keyword>
<keyword id="KW-0456">Lyase</keyword>
<keyword id="KW-0566">Pantothenate biosynthesis</keyword>
<keyword id="KW-0670">Pyruvate</keyword>
<keyword id="KW-0704">Schiff base</keyword>
<keyword id="KW-0865">Zymogen</keyword>
<comment type="function">
    <text evidence="1">Catalyzes the pyruvoyl-dependent decarboxylation of aspartate to produce beta-alanine.</text>
</comment>
<comment type="catalytic activity">
    <reaction evidence="1">
        <text>L-aspartate + H(+) = beta-alanine + CO2</text>
        <dbReference type="Rhea" id="RHEA:19497"/>
        <dbReference type="ChEBI" id="CHEBI:15378"/>
        <dbReference type="ChEBI" id="CHEBI:16526"/>
        <dbReference type="ChEBI" id="CHEBI:29991"/>
        <dbReference type="ChEBI" id="CHEBI:57966"/>
        <dbReference type="EC" id="4.1.1.11"/>
    </reaction>
</comment>
<comment type="cofactor">
    <cofactor evidence="1">
        <name>pyruvate</name>
        <dbReference type="ChEBI" id="CHEBI:15361"/>
    </cofactor>
    <text evidence="1">Binds 1 pyruvoyl group covalently per subunit.</text>
</comment>
<comment type="pathway">
    <text evidence="1">Cofactor biosynthesis; (R)-pantothenate biosynthesis; beta-alanine from L-aspartate: step 1/1.</text>
</comment>
<comment type="subunit">
    <text evidence="1">Heterooctamer of four alpha and four beta subunits.</text>
</comment>
<comment type="subcellular location">
    <subcellularLocation>
        <location evidence="1">Cytoplasm</location>
    </subcellularLocation>
</comment>
<comment type="PTM">
    <text evidence="1">Is synthesized initially as an inactive proenzyme, which is activated by self-cleavage at a specific serine bond to produce a beta-subunit with a hydroxyl group at its C-terminus and an alpha-subunit with a pyruvoyl group at its N-terminus.</text>
</comment>
<comment type="similarity">
    <text evidence="1">Belongs to the PanD family.</text>
</comment>